<feature type="chain" id="PRO_0000450616" description="O-phosphoseryl-tRNA(Sec) selenium transferase">
    <location>
        <begin position="1"/>
        <end position="595"/>
    </location>
</feature>
<feature type="region of interest" description="Phosphate loop (P-loop)" evidence="1">
    <location>
        <begin position="96"/>
        <end position="106"/>
    </location>
</feature>
<feature type="region of interest" description="Disordered" evidence="4">
    <location>
        <begin position="174"/>
        <end position="208"/>
    </location>
</feature>
<feature type="region of interest" description="Disordered" evidence="4">
    <location>
        <begin position="257"/>
        <end position="278"/>
    </location>
</feature>
<feature type="compositionally biased region" description="Polar residues" evidence="4">
    <location>
        <begin position="174"/>
        <end position="187"/>
    </location>
</feature>
<feature type="compositionally biased region" description="Basic and acidic residues" evidence="4">
    <location>
        <begin position="196"/>
        <end position="205"/>
    </location>
</feature>
<feature type="binding site" evidence="3">
    <location>
        <position position="75"/>
    </location>
    <ligand>
        <name>pyridoxal 5'-phosphate</name>
        <dbReference type="ChEBI" id="CHEBI:597326"/>
    </ligand>
</feature>
<feature type="binding site" evidence="3">
    <location>
        <position position="97"/>
    </location>
    <ligand>
        <name>substrate</name>
    </ligand>
</feature>
<feature type="binding site" evidence="3">
    <location>
        <position position="98"/>
    </location>
    <ligand>
        <name>substrate</name>
    </ligand>
</feature>
<feature type="binding site" evidence="3">
    <location>
        <position position="105"/>
    </location>
    <ligand>
        <name>substrate</name>
    </ligand>
</feature>
<feature type="binding site" evidence="3">
    <location>
        <position position="358"/>
    </location>
    <ligand>
        <name>tRNA</name>
        <dbReference type="ChEBI" id="CHEBI:17843"/>
    </ligand>
    <ligandPart>
        <name>tRNA variable arm</name>
    </ligandPart>
</feature>
<feature type="binding site" evidence="3">
    <location>
        <position position="400"/>
    </location>
    <ligand>
        <name>substrate</name>
    </ligand>
</feature>
<feature type="site" description="May act as a substrate filter by repelling compounds with a negatively charged alpha-carboxylate" evidence="3">
    <location>
        <position position="74"/>
    </location>
</feature>
<feature type="modified residue" description="N6-(pyridoxal phosphate)lysine" evidence="3">
    <location>
        <position position="371"/>
    </location>
</feature>
<evidence type="ECO:0000250" key="1">
    <source>
        <dbReference type="UniProtKB" id="Q9HD40"/>
    </source>
</evidence>
<evidence type="ECO:0000255" key="2">
    <source>
        <dbReference type="PIRNR" id="PIRNR017689"/>
    </source>
</evidence>
<evidence type="ECO:0000255" key="3">
    <source>
        <dbReference type="PIRSR" id="PIRSR017689-50"/>
    </source>
</evidence>
<evidence type="ECO:0000256" key="4">
    <source>
        <dbReference type="SAM" id="MobiDB-lite"/>
    </source>
</evidence>
<evidence type="ECO:0000269" key="5">
    <source>
    </source>
</evidence>
<evidence type="ECO:0000303" key="6">
    <source>
    </source>
</evidence>
<evidence type="ECO:0000305" key="7"/>
<evidence type="ECO:0000312" key="8">
    <source>
        <dbReference type="EMBL" id="AYU76541.1"/>
    </source>
</evidence>
<evidence type="ECO:0000312" key="9">
    <source>
        <dbReference type="Proteomes" id="UP000274082"/>
    </source>
</evidence>
<gene>
    <name evidence="6" type="primary">SepSecS</name>
    <name evidence="8" type="ORF">LdCL_090015500</name>
</gene>
<sequence>MDDRSLKLAEDFVSARYIEAGRESLRATARIMRSILAQRCCPDEGLTDAAIELILRQLSLMDTNNLAHHVGGGEREGRVVSALVRMRHFHLTHGIGRSGDLFSEQPKAAGSSLLYKITNVLMLDLIRQAGAPSTAAAVVVPMATGMTLALVLRCVAKTHMKELMKEAEAVQLQRTVTKDSTSATSAAPVQEPPMSEADRDRHDRTSLPVPATPRYVIWPRIDQKTALKCIDAAGLVPVPVQLRPAVPLARSAAPCVSTNRDSLDRGQDSIGSPSTPTSSSSLFLECHVDDVAAAVNAVGGPSQVVCVLSTTSCFAPRLPDNTVAIAQYCKKAGIPYVVNNAYGVQSRRIMTRLDAAQRLGRVDFVVQSGDKNFLVPVGGSIICSGDKERCKAVAALYAGRASMSPIVDLFITALSLGRRGMQTLWSDRYKCRARLIRQLRVFARERREVLLVDDSDDDKADEDTVGGSQRTSNAVVPRNDISVAVTMRAYGLPAAEASSSGAQLGSEQAGRVTNWAAARALGAQLFRSAVTGPRVITPAPSTPTTIAGCTFRNYGMHQDREPPCPLLVIACGIGMSESEVDALMARLRDLWPVPA</sequence>
<name>SPCS_LEIDO</name>
<organism evidence="9">
    <name type="scientific">Leishmania donovani</name>
    <dbReference type="NCBI Taxonomy" id="5661"/>
    <lineage>
        <taxon>Eukaryota</taxon>
        <taxon>Discoba</taxon>
        <taxon>Euglenozoa</taxon>
        <taxon>Kinetoplastea</taxon>
        <taxon>Metakinetoplastina</taxon>
        <taxon>Trypanosomatida</taxon>
        <taxon>Trypanosomatidae</taxon>
        <taxon>Leishmaniinae</taxon>
        <taxon>Leishmania</taxon>
    </lineage>
</organism>
<comment type="function">
    <text evidence="2 5">Converts O-phosphoseryl-tRNA(Sec) to selenocysteinyl-tRNA(Sec) required for selenoprotein biosynthesis.</text>
</comment>
<comment type="catalytic activity">
    <reaction evidence="2 5">
        <text>O-phospho-L-seryl-tRNA(Sec) + selenophosphate + H2O = L-selenocysteinyl-tRNA(Sec) + 2 phosphate</text>
        <dbReference type="Rhea" id="RHEA:25041"/>
        <dbReference type="Rhea" id="RHEA-COMP:9743"/>
        <dbReference type="Rhea" id="RHEA-COMP:9947"/>
        <dbReference type="ChEBI" id="CHEBI:15377"/>
        <dbReference type="ChEBI" id="CHEBI:16144"/>
        <dbReference type="ChEBI" id="CHEBI:43474"/>
        <dbReference type="ChEBI" id="CHEBI:78551"/>
        <dbReference type="ChEBI" id="CHEBI:78573"/>
        <dbReference type="EC" id="2.9.1.2"/>
    </reaction>
</comment>
<comment type="cofactor">
    <cofactor evidence="2 3">
        <name>pyridoxal 5'-phosphate</name>
        <dbReference type="ChEBI" id="CHEBI:597326"/>
    </cofactor>
</comment>
<comment type="pathway">
    <text evidence="2 5">Aminoacyl-tRNA biosynthesis; selenocysteinyl-tRNA(Sec) biosynthesis; selenocysteinyl-tRNA(Sec) from L-seryl-tRNA(Sec) (archaeal/eukaryal route): step 2/2.</text>
</comment>
<comment type="subunit">
    <text evidence="5">Homotetramer composed of two homodimers.</text>
</comment>
<comment type="subcellular location">
    <subcellularLocation>
        <location evidence="2 5">Cytoplasm</location>
    </subcellularLocation>
</comment>
<comment type="developmental stage">
    <text evidence="5">Expressed at the promastigote stage.</text>
</comment>
<comment type="disruption phenotype">
    <text evidence="5">Impaired selenocysteine incorporation into proteins, such as SelT, SelK and SelTryp (PubMed:26586914). No defect in promastigote growth rate and in their capacity to infect host macrophages (PubMed:26586914).</text>
</comment>
<comment type="similarity">
    <text evidence="2">Belongs to the SepSecS family.</text>
</comment>
<reference evidence="9" key="1">
    <citation type="journal article" date="2018" name="Sci. Rep.">
        <title>A complete Leishmania donovani reference genome identifies novel genetic variations associated with virulence.</title>
        <authorList>
            <person name="Lypaczewski P."/>
            <person name="Hoshizaki J."/>
            <person name="Zhang W.-W."/>
            <person name="McCall L.-I."/>
            <person name="Torcivia-Rodriguez J."/>
            <person name="Simonyan V."/>
            <person name="Kaur A."/>
            <person name="Dewar K."/>
            <person name="Matlashewski G."/>
        </authorList>
    </citation>
    <scope>NUCLEOTIDE SEQUENCE [LARGE SCALE GENOMIC DNA]</scope>
    <source>
        <strain evidence="9">LdCL</strain>
    </source>
</reference>
<reference evidence="7" key="2">
    <citation type="journal article" date="2016" name="J. Biol. Chem.">
        <title>Leishmania donovani Encodes a Functional Selenocysteinyl-tRNA Synthase.</title>
        <authorList>
            <person name="Manhas R."/>
            <person name="Gowri V.S."/>
            <person name="Madhubala R."/>
        </authorList>
    </citation>
    <scope>FUNCTION</scope>
    <scope>CATALYTIC ACTIVITY</scope>
    <scope>PATHWAY</scope>
    <scope>SUBUNIT</scope>
    <scope>SUBCELLULAR LOCATION</scope>
    <scope>DEVELOPMENTAL STAGE</scope>
    <scope>DISRUPTION PHENOTYPE</scope>
    <source>
        <strain evidence="5">MHOM/SD/62/1SCL2D</strain>
    </source>
</reference>
<proteinExistence type="evidence at protein level"/>
<dbReference type="EC" id="2.9.1.2" evidence="2 5"/>
<dbReference type="EMBL" id="CP029508">
    <property type="protein sequence ID" value="AYU76541.1"/>
    <property type="molecule type" value="Genomic_DNA"/>
</dbReference>
<dbReference type="RefSeq" id="XP_003858779.1">
    <property type="nucleotide sequence ID" value="XM_003858731.1"/>
</dbReference>
<dbReference type="SMR" id="A0A3S7WQS5"/>
<dbReference type="KEGG" id="ldo:LDBPK_091000"/>
<dbReference type="VEuPathDB" id="TriTrypDB:LdBPK_091000.1"/>
<dbReference type="VEuPathDB" id="TriTrypDB:LdCL_090015500"/>
<dbReference type="VEuPathDB" id="TriTrypDB:LDHU3_09.1170"/>
<dbReference type="OMA" id="APRVPDX"/>
<dbReference type="OrthoDB" id="10263545at2759"/>
<dbReference type="UniPathway" id="UPA00906">
    <property type="reaction ID" value="UER00898"/>
</dbReference>
<dbReference type="Proteomes" id="UP000274082">
    <property type="component" value="Chromosome ldcl_09"/>
</dbReference>
<dbReference type="GO" id="GO:0005737">
    <property type="term" value="C:cytoplasm"/>
    <property type="evidence" value="ECO:0000314"/>
    <property type="project" value="UniProtKB"/>
</dbReference>
<dbReference type="GO" id="GO:0098621">
    <property type="term" value="F:O-phosphoseryl-tRNA(Sec) selenium transferase activity"/>
    <property type="evidence" value="ECO:0007669"/>
    <property type="project" value="UniProtKB-EC"/>
</dbReference>
<dbReference type="GO" id="GO:0016785">
    <property type="term" value="F:selenotransferase activity"/>
    <property type="evidence" value="ECO:0000314"/>
    <property type="project" value="UniProtKB"/>
</dbReference>
<dbReference type="GO" id="GO:0000049">
    <property type="term" value="F:tRNA binding"/>
    <property type="evidence" value="ECO:0007669"/>
    <property type="project" value="UniProtKB-KW"/>
</dbReference>
<dbReference type="GO" id="GO:0001717">
    <property type="term" value="P:conversion of seryl-tRNAsec to selenocys-tRNAsec"/>
    <property type="evidence" value="ECO:0000314"/>
    <property type="project" value="UniProtKB"/>
</dbReference>
<dbReference type="GO" id="GO:0001514">
    <property type="term" value="P:selenocysteine incorporation"/>
    <property type="evidence" value="ECO:0007669"/>
    <property type="project" value="TreeGrafter"/>
</dbReference>
<dbReference type="Gene3D" id="3.40.640.10">
    <property type="entry name" value="Type I PLP-dependent aspartate aminotransferase-like (Major domain)"/>
    <property type="match status" value="1"/>
</dbReference>
<dbReference type="InterPro" id="IPR015424">
    <property type="entry name" value="PyrdxlP-dep_Trfase"/>
</dbReference>
<dbReference type="InterPro" id="IPR015421">
    <property type="entry name" value="PyrdxlP-dep_Trfase_major"/>
</dbReference>
<dbReference type="InterPro" id="IPR019872">
    <property type="entry name" value="Sec-tRNA_Se_transferase"/>
</dbReference>
<dbReference type="InterPro" id="IPR008829">
    <property type="entry name" value="SepSecS/SepCysS"/>
</dbReference>
<dbReference type="PANTHER" id="PTHR12944:SF2">
    <property type="entry name" value="O-PHOSPHOSERYL-TRNA(SEC) SELENIUM TRANSFERASE"/>
    <property type="match status" value="1"/>
</dbReference>
<dbReference type="PANTHER" id="PTHR12944">
    <property type="entry name" value="SOLUBLE LIVER ANTIGEN/LIVER PANCREAS ANTIGEN"/>
    <property type="match status" value="1"/>
</dbReference>
<dbReference type="Pfam" id="PF05889">
    <property type="entry name" value="SepSecS"/>
    <property type="match status" value="2"/>
</dbReference>
<dbReference type="PIRSF" id="PIRSF017689">
    <property type="entry name" value="SepSecS"/>
    <property type="match status" value="1"/>
</dbReference>
<dbReference type="SUPFAM" id="SSF53383">
    <property type="entry name" value="PLP-dependent transferases"/>
    <property type="match status" value="1"/>
</dbReference>
<keyword id="KW-0963">Cytoplasm</keyword>
<keyword id="KW-0648">Protein biosynthesis</keyword>
<keyword id="KW-0663">Pyridoxal phosphate</keyword>
<keyword id="KW-0694">RNA-binding</keyword>
<keyword id="KW-0711">Selenium</keyword>
<keyword id="KW-0808">Transferase</keyword>
<keyword id="KW-0820">tRNA-binding</keyword>
<protein>
    <recommendedName>
        <fullName evidence="2">O-phosphoseryl-tRNA(Sec) selenium transferase</fullName>
        <ecNumber evidence="2 5">2.9.1.2</ecNumber>
    </recommendedName>
    <alternativeName>
        <fullName evidence="2">Selenocysteine synthase</fullName>
    </alternativeName>
    <alternativeName>
        <fullName evidence="2 6">Selenocysteinyl-tRNA(Sec) synthase</fullName>
    </alternativeName>
    <alternativeName>
        <fullName evidence="2">Sep-tRNA:Sec-tRNA synthase</fullName>
    </alternativeName>
</protein>
<accession>A0A3S7WQS5</accession>